<proteinExistence type="evidence at protein level"/>
<comment type="function">
    <text evidence="2 3 4 5 6">Virulence effector that plays a role in hijacking the host vesicular trafficking by recruiting the small guanosine triphosphatase (GTPase) Rab1 to the cytosolic face of the Legionella-containing vacuole (LCVs). Acts as a phosphocholine transferase by mediating the addition of phosphocholine to Ser residues of host RAB1 (RAB1A, RAB1B or RAB1C) and RAB35, leading to displacement of GDP dissociation inhibitors (GDI). Phosphocholination of target proteins also impairs accessibility to GTPase effector LepB. Can act on both GDP-bound and GTP-bound Rab proteins.</text>
</comment>
<comment type="catalytic activity">
    <reaction evidence="3">
        <text>[Rab1 protein]-L-serine + CDP-choline = [Rab1 protein]-O-phosphocholine-L-serine + CMP + H(+)</text>
        <dbReference type="Rhea" id="RHEA:56080"/>
        <dbReference type="Rhea" id="RHEA-COMP:14085"/>
        <dbReference type="Rhea" id="RHEA-COMP:14376"/>
        <dbReference type="ChEBI" id="CHEBI:15378"/>
        <dbReference type="ChEBI" id="CHEBI:29999"/>
        <dbReference type="ChEBI" id="CHEBI:58779"/>
        <dbReference type="ChEBI" id="CHEBI:60377"/>
        <dbReference type="ChEBI" id="CHEBI:138595"/>
    </reaction>
</comment>
<comment type="biophysicochemical properties">
    <kinetics>
        <KM evidence="5">122 uM for RAB1B</KM>
    </kinetics>
</comment>
<comment type="interaction">
    <interactant intactId="EBI-26359852">
        <id>Q5ZXN6</id>
    </interactant>
    <interactant intactId="EBI-2349758">
        <id>Q86WP2</id>
        <label>GPBP1</label>
    </interactant>
    <organismsDiffer>true</organismsDiffer>
    <experiments>2</experiments>
</comment>
<comment type="interaction">
    <interactant intactId="EBI-26359852">
        <id>Q5ZXN6</id>
    </interactant>
    <interactant intactId="EBI-1056885">
        <id>Q8N3F8</id>
        <label>MICALL1</label>
    </interactant>
    <organismsDiffer>true</organismsDiffer>
    <experiments>2</experiments>
</comment>
<comment type="interaction">
    <interactant intactId="EBI-26359852">
        <id>Q5ZXN6</id>
    </interactant>
    <interactant intactId="EBI-716549">
        <id>Q9H4M7</id>
        <label>PLEKHA4</label>
    </interactant>
    <organismsDiffer>true</organismsDiffer>
    <experiments>2</experiments>
</comment>
<comment type="interaction">
    <interactant intactId="EBI-26359852">
        <id>Q5ZXN6</id>
    </interactant>
    <interactant intactId="EBI-10241513">
        <id>Q494U1</id>
        <label>PLEKHN1</label>
    </interactant>
    <organismsDiffer>true</organismsDiffer>
    <experiments>7</experiments>
</comment>
<comment type="interaction">
    <interactant intactId="EBI-26359852">
        <id>Q5ZXN6</id>
    </interactant>
    <interactant intactId="EBI-597063">
        <id>Q8TBK6</id>
        <label>ZCCHC10</label>
    </interactant>
    <organismsDiffer>true</organismsDiffer>
    <experiments>2</experiments>
</comment>
<comment type="subcellular location">
    <subcellularLocation>
        <location evidence="4">Secreted</location>
    </subcellularLocation>
    <subcellularLocation>
        <location evidence="4">Host cytoplasm</location>
    </subcellularLocation>
    <text>Translocated into the host cell via the type IV secretion system (T4SS).</text>
</comment>
<comment type="domain">
    <text evidence="3">The FIDO domain mediates the phosphocholine transferase activity.</text>
</comment>
<reference key="1">
    <citation type="journal article" date="2004" name="Science">
        <title>The genomic sequence of the accidental pathogen Legionella pneumophila.</title>
        <authorList>
            <person name="Chien M."/>
            <person name="Morozova I."/>
            <person name="Shi S."/>
            <person name="Sheng H."/>
            <person name="Chen J."/>
            <person name="Gomez S.M."/>
            <person name="Asamani G."/>
            <person name="Hill K."/>
            <person name="Nuara J."/>
            <person name="Feder M."/>
            <person name="Rineer J."/>
            <person name="Greenberg J.J."/>
            <person name="Steshenko V."/>
            <person name="Park S.H."/>
            <person name="Zhao B."/>
            <person name="Teplitskaya E."/>
            <person name="Edwards J.R."/>
            <person name="Pampou S."/>
            <person name="Georghiou A."/>
            <person name="Chou I.-C."/>
            <person name="Iannuccilli W."/>
            <person name="Ulz M.E."/>
            <person name="Kim D.H."/>
            <person name="Geringer-Sameth A."/>
            <person name="Goldsberry C."/>
            <person name="Morozov P."/>
            <person name="Fischer S.G."/>
            <person name="Segal G."/>
            <person name="Qu X."/>
            <person name="Rzhetsky A."/>
            <person name="Zhang P."/>
            <person name="Cayanis E."/>
            <person name="De Jong P.J."/>
            <person name="Ju J."/>
            <person name="Kalachikov S."/>
            <person name="Shuman H.A."/>
            <person name="Russo J.J."/>
        </authorList>
    </citation>
    <scope>NUCLEOTIDE SEQUENCE [LARGE SCALE GENOMIC DNA]</scope>
    <source>
        <strain>Philadelphia 1 / ATCC 33152 / DSM 7513</strain>
    </source>
</reference>
<reference key="2">
    <citation type="journal article" date="2008" name="Science">
        <title>Ankyrin repeat proteins comprise a diverse family of bacterial type IV effectors.</title>
        <authorList>
            <person name="Pan X."/>
            <person name="Luhrmann A."/>
            <person name="Satoh A."/>
            <person name="Laskowski-Arce M.A."/>
            <person name="Roy C.R."/>
        </authorList>
    </citation>
    <scope>FUNCTION</scope>
</reference>
<reference key="3">
    <citation type="journal article" date="2011" name="Proc. Natl. Acad. Sci. U.S.A.">
        <title>Legionella pneumophila regulates the small GTPase Rab1 activity by reversible phosphorylcholination.</title>
        <authorList>
            <person name="Tan Y."/>
            <person name="Arnold R.J."/>
            <person name="Luo Z.Q."/>
        </authorList>
    </citation>
    <scope>FUNCTION</scope>
    <scope>SUBCELLULAR LOCATION</scope>
</reference>
<reference key="4">
    <citation type="journal article" date="2011" name="Nature">
        <title>Modulation of Rab GTPase function by a protein phosphocholine transferase.</title>
        <authorList>
            <person name="Mukherjee S."/>
            <person name="Liu X."/>
            <person name="Arasaki K."/>
            <person name="McDonough J."/>
            <person name="Galan J.E."/>
            <person name="Roy C.R."/>
        </authorList>
    </citation>
    <scope>FUNCTION</scope>
    <scope>CATALYTIC ACTIVITY</scope>
    <scope>MUTAGENESIS OF HIS-229</scope>
</reference>
<reference key="5">
    <citation type="journal article" date="2012" name="EMBO J.">
        <title>Reversible phosphocholination of Rab proteins by Legionella pneumophila effector proteins.</title>
        <authorList>
            <person name="Goody P.R."/>
            <person name="Heller K."/>
            <person name="Oesterlin L.K."/>
            <person name="Muller M.P."/>
            <person name="Itzen A."/>
            <person name="Goody R.S."/>
        </authorList>
    </citation>
    <scope>FUNCTION</scope>
    <scope>BIOPHYSICOCHEMICAL PROPERTIES</scope>
</reference>
<reference key="6">
    <citation type="journal article" date="2012" name="Proc. Natl. Acad. Sci. U.S.A.">
        <title>Posttranslational modifications of Rab proteins cause effective displacement of GDP dissociation inhibitor.</title>
        <authorList>
            <person name="Oesterlin L.K."/>
            <person name="Goody R.S."/>
            <person name="Itzen A."/>
        </authorList>
    </citation>
    <scope>FUNCTION</scope>
</reference>
<name>ANKX_LEGPH</name>
<feature type="chain" id="PRO_0000417543" description="Phosphocholine transferase AnkX">
    <location>
        <begin position="1"/>
        <end position="949"/>
    </location>
</feature>
<feature type="domain" description="Fido" evidence="1">
    <location>
        <begin position="155"/>
        <end position="289"/>
    </location>
</feature>
<feature type="repeat" description="ANK 1">
    <location>
        <begin position="391"/>
        <end position="420"/>
    </location>
</feature>
<feature type="repeat" description="ANK 2">
    <location>
        <begin position="424"/>
        <end position="453"/>
    </location>
</feature>
<feature type="repeat" description="ANK 3">
    <location>
        <begin position="464"/>
        <end position="494"/>
    </location>
</feature>
<feature type="repeat" description="ANK 4">
    <location>
        <begin position="498"/>
        <end position="527"/>
    </location>
</feature>
<feature type="repeat" description="ANK 5">
    <location>
        <begin position="554"/>
        <end position="583"/>
    </location>
</feature>
<feature type="repeat" description="ANK 6">
    <location>
        <begin position="588"/>
        <end position="617"/>
    </location>
</feature>
<feature type="repeat" description="ANK 7">
    <location>
        <begin position="658"/>
        <end position="687"/>
    </location>
</feature>
<feature type="repeat" description="ANK 8">
    <location>
        <begin position="691"/>
        <end position="720"/>
    </location>
</feature>
<feature type="repeat" description="ANK 9">
    <location>
        <begin position="725"/>
        <end position="767"/>
    </location>
</feature>
<feature type="repeat" description="ANK 10">
    <location>
        <begin position="771"/>
        <end position="800"/>
    </location>
</feature>
<feature type="mutagenesis site" description="Abolishes phosphocholine transferase activity." evidence="3">
    <original>H</original>
    <variation>A</variation>
    <location>
        <position position="229"/>
    </location>
</feature>
<feature type="strand" evidence="8">
    <location>
        <begin position="2"/>
        <end position="4"/>
    </location>
</feature>
<feature type="helix" evidence="9">
    <location>
        <begin position="11"/>
        <end position="16"/>
    </location>
</feature>
<feature type="helix" evidence="9">
    <location>
        <begin position="19"/>
        <end position="25"/>
    </location>
</feature>
<feature type="turn" evidence="9">
    <location>
        <begin position="29"/>
        <end position="38"/>
    </location>
</feature>
<feature type="helix" evidence="9">
    <location>
        <begin position="39"/>
        <end position="44"/>
    </location>
</feature>
<feature type="helix" evidence="9">
    <location>
        <begin position="48"/>
        <end position="64"/>
    </location>
</feature>
<feature type="strand" evidence="7">
    <location>
        <begin position="66"/>
        <end position="69"/>
    </location>
</feature>
<feature type="helix" evidence="9">
    <location>
        <begin position="74"/>
        <end position="84"/>
    </location>
</feature>
<feature type="helix" evidence="10">
    <location>
        <begin position="89"/>
        <end position="92"/>
    </location>
</feature>
<feature type="strand" evidence="9">
    <location>
        <begin position="106"/>
        <end position="109"/>
    </location>
</feature>
<feature type="helix" evidence="9">
    <location>
        <begin position="111"/>
        <end position="113"/>
    </location>
</feature>
<feature type="helix" evidence="9">
    <location>
        <begin position="116"/>
        <end position="124"/>
    </location>
</feature>
<feature type="helix" evidence="9">
    <location>
        <begin position="126"/>
        <end position="130"/>
    </location>
</feature>
<feature type="strand" evidence="9">
    <location>
        <begin position="134"/>
        <end position="141"/>
    </location>
</feature>
<feature type="strand" evidence="9">
    <location>
        <begin position="144"/>
        <end position="148"/>
    </location>
</feature>
<feature type="turn" evidence="10">
    <location>
        <begin position="151"/>
        <end position="154"/>
    </location>
</feature>
<feature type="turn" evidence="9">
    <location>
        <begin position="157"/>
        <end position="159"/>
    </location>
</feature>
<feature type="helix" evidence="9">
    <location>
        <begin position="160"/>
        <end position="174"/>
    </location>
</feature>
<feature type="strand" evidence="11">
    <location>
        <begin position="176"/>
        <end position="178"/>
    </location>
</feature>
<feature type="strand" evidence="9">
    <location>
        <begin position="181"/>
        <end position="184"/>
    </location>
</feature>
<feature type="helix" evidence="9">
    <location>
        <begin position="190"/>
        <end position="207"/>
    </location>
</feature>
<feature type="helix" evidence="9">
    <location>
        <begin position="211"/>
        <end position="227"/>
    </location>
</feature>
<feature type="strand" evidence="9">
    <location>
        <begin position="231"/>
        <end position="233"/>
    </location>
</feature>
<feature type="helix" evidence="9">
    <location>
        <begin position="235"/>
        <end position="239"/>
    </location>
</feature>
<feature type="turn" evidence="9">
    <location>
        <begin position="240"/>
        <end position="244"/>
    </location>
</feature>
<feature type="helix" evidence="9">
    <location>
        <begin position="245"/>
        <end position="250"/>
    </location>
</feature>
<feature type="turn" evidence="9">
    <location>
        <begin position="262"/>
        <end position="265"/>
    </location>
</feature>
<feature type="helix" evidence="9">
    <location>
        <begin position="269"/>
        <end position="291"/>
    </location>
</feature>
<feature type="helix" evidence="9">
    <location>
        <begin position="298"/>
        <end position="300"/>
    </location>
</feature>
<feature type="helix" evidence="9">
    <location>
        <begin position="305"/>
        <end position="314"/>
    </location>
</feature>
<feature type="helix" evidence="9">
    <location>
        <begin position="318"/>
        <end position="324"/>
    </location>
</feature>
<feature type="helix" evidence="9">
    <location>
        <begin position="333"/>
        <end position="344"/>
    </location>
</feature>
<feature type="helix" evidence="9">
    <location>
        <begin position="345"/>
        <end position="347"/>
    </location>
</feature>
<feature type="strand" evidence="10">
    <location>
        <begin position="348"/>
        <end position="351"/>
    </location>
</feature>
<feature type="helix" evidence="9">
    <location>
        <begin position="352"/>
        <end position="359"/>
    </location>
</feature>
<feature type="helix" evidence="9">
    <location>
        <begin position="363"/>
        <end position="370"/>
    </location>
</feature>
<feature type="helix" evidence="9">
    <location>
        <begin position="375"/>
        <end position="378"/>
    </location>
</feature>
<feature type="turn" evidence="9">
    <location>
        <begin position="388"/>
        <end position="390"/>
    </location>
</feature>
<feature type="helix" evidence="9">
    <location>
        <begin position="395"/>
        <end position="402"/>
    </location>
</feature>
<feature type="helix" evidence="9">
    <location>
        <begin position="405"/>
        <end position="413"/>
    </location>
</feature>
<feature type="helix" evidence="9">
    <location>
        <begin position="428"/>
        <end position="435"/>
    </location>
</feature>
<feature type="helix" evidence="9">
    <location>
        <begin position="438"/>
        <end position="449"/>
    </location>
</feature>
<feature type="helix" evidence="9">
    <location>
        <begin position="454"/>
        <end position="458"/>
    </location>
</feature>
<feature type="helix" evidence="9">
    <location>
        <begin position="468"/>
        <end position="473"/>
    </location>
</feature>
<feature type="turn" evidence="9">
    <location>
        <begin position="474"/>
        <end position="476"/>
    </location>
</feature>
<feature type="helix" evidence="11">
    <location>
        <begin position="478"/>
        <end position="485"/>
    </location>
</feature>
<feature type="helix" evidence="11">
    <location>
        <begin position="502"/>
        <end position="508"/>
    </location>
</feature>
<feature type="helix" evidence="11">
    <location>
        <begin position="512"/>
        <end position="520"/>
    </location>
</feature>
<feature type="helix" evidence="11">
    <location>
        <begin position="527"/>
        <end position="536"/>
    </location>
</feature>
<feature type="helix" evidence="11">
    <location>
        <begin position="539"/>
        <end position="549"/>
    </location>
</feature>
<feature type="helix" evidence="11">
    <location>
        <begin position="556"/>
        <end position="564"/>
    </location>
</feature>
<feature type="helix" evidence="11">
    <location>
        <begin position="568"/>
        <end position="577"/>
    </location>
</feature>
<feature type="helix" evidence="11">
    <location>
        <begin position="592"/>
        <end position="598"/>
    </location>
</feature>
<feature type="helix" evidence="11">
    <location>
        <begin position="602"/>
        <end position="610"/>
    </location>
</feature>
<feature type="helix" evidence="11">
    <location>
        <begin position="625"/>
        <end position="628"/>
    </location>
</feature>
<feature type="helix" evidence="11">
    <location>
        <begin position="629"/>
        <end position="631"/>
    </location>
</feature>
<feature type="helix" evidence="11">
    <location>
        <begin position="634"/>
        <end position="647"/>
    </location>
</feature>
<feature type="turn" evidence="11">
    <location>
        <begin position="656"/>
        <end position="658"/>
    </location>
</feature>
<feature type="helix" evidence="11">
    <location>
        <begin position="662"/>
        <end position="668"/>
    </location>
</feature>
<feature type="helix" evidence="11">
    <location>
        <begin position="672"/>
        <end position="680"/>
    </location>
</feature>
<feature type="helix" evidence="11">
    <location>
        <begin position="695"/>
        <end position="699"/>
    </location>
</feature>
<feature type="helix" evidence="11">
    <location>
        <begin position="706"/>
        <end position="715"/>
    </location>
</feature>
<feature type="strand" evidence="11">
    <location>
        <begin position="722"/>
        <end position="724"/>
    </location>
</feature>
<feature type="helix" evidence="11">
    <location>
        <begin position="728"/>
        <end position="734"/>
    </location>
</feature>
<feature type="helix" evidence="11">
    <location>
        <begin position="743"/>
        <end position="757"/>
    </location>
</feature>
<feature type="helix" evidence="11">
    <location>
        <begin position="758"/>
        <end position="760"/>
    </location>
</feature>
<feature type="helix" evidence="11">
    <location>
        <begin position="774"/>
        <end position="781"/>
    </location>
</feature>
<feature type="turn" evidence="11">
    <location>
        <begin position="784"/>
        <end position="786"/>
    </location>
</feature>
<feature type="helix" evidence="11">
    <location>
        <begin position="787"/>
        <end position="793"/>
    </location>
</feature>
<gene>
    <name type="primary">ankX</name>
    <name type="synonym">legA8</name>
    <name type="ordered locus">lpg0695</name>
</gene>
<keyword id="KW-0002">3D-structure</keyword>
<keyword id="KW-0040">ANK repeat</keyword>
<keyword id="KW-1035">Host cytoplasm</keyword>
<keyword id="KW-1185">Reference proteome</keyword>
<keyword id="KW-0677">Repeat</keyword>
<keyword id="KW-0964">Secreted</keyword>
<keyword id="KW-0808">Transferase</keyword>
<keyword id="KW-0843">Virulence</keyword>
<accession>Q5ZXN6</accession>
<organism>
    <name type="scientific">Legionella pneumophila subsp. pneumophila (strain Philadelphia 1 / ATCC 33152 / DSM 7513)</name>
    <dbReference type="NCBI Taxonomy" id="272624"/>
    <lineage>
        <taxon>Bacteria</taxon>
        <taxon>Pseudomonadati</taxon>
        <taxon>Pseudomonadota</taxon>
        <taxon>Gammaproteobacteria</taxon>
        <taxon>Legionellales</taxon>
        <taxon>Legionellaceae</taxon>
        <taxon>Legionella</taxon>
    </lineage>
</organism>
<protein>
    <recommendedName>
        <fullName>Phosphocholine transferase AnkX</fullName>
        <shortName>PC transferase</shortName>
        <ecNumber>2.7.1.-</ecNumber>
    </recommendedName>
    <alternativeName>
        <fullName>Ankyrin repeat-containing protein X</fullName>
    </alternativeName>
</protein>
<dbReference type="EC" id="2.7.1.-"/>
<dbReference type="EMBL" id="AE017354">
    <property type="protein sequence ID" value="AAU26784.1"/>
    <property type="molecule type" value="Genomic_DNA"/>
</dbReference>
<dbReference type="RefSeq" id="YP_094731.1">
    <property type="nucleotide sequence ID" value="NC_002942.5"/>
</dbReference>
<dbReference type="PDB" id="4BEP">
    <property type="method" value="X-ray"/>
    <property type="resolution" value="3.14 A"/>
    <property type="chains" value="A/B=2-484"/>
</dbReference>
<dbReference type="PDB" id="4BER">
    <property type="method" value="X-ray"/>
    <property type="resolution" value="2.60 A"/>
    <property type="chains" value="A/B=2-484"/>
</dbReference>
<dbReference type="PDB" id="4BES">
    <property type="method" value="X-ray"/>
    <property type="resolution" value="2.54 A"/>
    <property type="chains" value="A=2-484"/>
</dbReference>
<dbReference type="PDB" id="4BET">
    <property type="method" value="X-ray"/>
    <property type="resolution" value="2.55 A"/>
    <property type="chains" value="A/B=2-484"/>
</dbReference>
<dbReference type="PDB" id="6SKU">
    <property type="method" value="X-ray"/>
    <property type="resolution" value="3.20 A"/>
    <property type="chains" value="A=1-800"/>
</dbReference>
<dbReference type="PDBsum" id="4BEP"/>
<dbReference type="PDBsum" id="4BER"/>
<dbReference type="PDBsum" id="4BES"/>
<dbReference type="PDBsum" id="4BET"/>
<dbReference type="PDBsum" id="6SKU"/>
<dbReference type="SASBDB" id="Q5ZXN6"/>
<dbReference type="SMR" id="Q5ZXN6"/>
<dbReference type="IntAct" id="Q5ZXN6">
    <property type="interactions" value="9"/>
</dbReference>
<dbReference type="MINT" id="Q5ZXN6"/>
<dbReference type="STRING" id="272624.lpg0695"/>
<dbReference type="PaxDb" id="272624-lpg0695"/>
<dbReference type="KEGG" id="lpn:lpg0695"/>
<dbReference type="PATRIC" id="fig|272624.6.peg.717"/>
<dbReference type="eggNOG" id="COG0666">
    <property type="taxonomic scope" value="Bacteria"/>
</dbReference>
<dbReference type="eggNOG" id="COG3177">
    <property type="taxonomic scope" value="Bacteria"/>
</dbReference>
<dbReference type="HOGENOM" id="CLU_308777_0_0_6"/>
<dbReference type="OrthoDB" id="5649256at2"/>
<dbReference type="SABIO-RK" id="Q5ZXN6"/>
<dbReference type="EvolutionaryTrace" id="Q5ZXN6"/>
<dbReference type="Proteomes" id="UP000000609">
    <property type="component" value="Chromosome"/>
</dbReference>
<dbReference type="GO" id="GO:0005576">
    <property type="term" value="C:extracellular region"/>
    <property type="evidence" value="ECO:0007669"/>
    <property type="project" value="UniProtKB-SubCell"/>
</dbReference>
<dbReference type="GO" id="GO:0030430">
    <property type="term" value="C:host cell cytoplasm"/>
    <property type="evidence" value="ECO:0000314"/>
    <property type="project" value="UniProtKB"/>
</dbReference>
<dbReference type="GO" id="GO:0044605">
    <property type="term" value="F:phosphocholine transferase activity"/>
    <property type="evidence" value="ECO:0000314"/>
    <property type="project" value="UniProtKB"/>
</dbReference>
<dbReference type="GO" id="GO:0043087">
    <property type="term" value="P:regulation of GTPase activity"/>
    <property type="evidence" value="ECO:0000314"/>
    <property type="project" value="UniProtKB"/>
</dbReference>
<dbReference type="Gene3D" id="1.25.40.20">
    <property type="entry name" value="Ankyrin repeat-containing domain"/>
    <property type="match status" value="3"/>
</dbReference>
<dbReference type="Gene3D" id="1.10.3290.10">
    <property type="entry name" value="Fido-like domain"/>
    <property type="match status" value="1"/>
</dbReference>
<dbReference type="InterPro" id="IPR054037">
    <property type="entry name" value="AnkX_ins"/>
</dbReference>
<dbReference type="InterPro" id="IPR002110">
    <property type="entry name" value="Ankyrin_rpt"/>
</dbReference>
<dbReference type="InterPro" id="IPR036770">
    <property type="entry name" value="Ankyrin_rpt-contain_sf"/>
</dbReference>
<dbReference type="InterPro" id="IPR003812">
    <property type="entry name" value="Fido"/>
</dbReference>
<dbReference type="InterPro" id="IPR036597">
    <property type="entry name" value="Fido-like_dom_sf"/>
</dbReference>
<dbReference type="InterPro" id="IPR050016">
    <property type="entry name" value="T4SS_AnkX"/>
</dbReference>
<dbReference type="NCBIfam" id="NF043028">
    <property type="entry name" value="T4SS_AnkX"/>
    <property type="match status" value="1"/>
</dbReference>
<dbReference type="PANTHER" id="PTHR24118">
    <property type="entry name" value="POTE ANKYRIN DOMAIN"/>
    <property type="match status" value="1"/>
</dbReference>
<dbReference type="PANTHER" id="PTHR24118:SF99">
    <property type="entry name" value="POTE ANKYRIN DOMAIN FAMILY MEMBER 3C-RELATED"/>
    <property type="match status" value="1"/>
</dbReference>
<dbReference type="Pfam" id="PF12796">
    <property type="entry name" value="Ank_2"/>
    <property type="match status" value="3"/>
</dbReference>
<dbReference type="Pfam" id="PF22170">
    <property type="entry name" value="AnkX_ins"/>
    <property type="match status" value="1"/>
</dbReference>
<dbReference type="PRINTS" id="PR01415">
    <property type="entry name" value="ANKYRIN"/>
</dbReference>
<dbReference type="SMART" id="SM00248">
    <property type="entry name" value="ANK"/>
    <property type="match status" value="11"/>
</dbReference>
<dbReference type="SUPFAM" id="SSF48403">
    <property type="entry name" value="Ankyrin repeat"/>
    <property type="match status" value="2"/>
</dbReference>
<dbReference type="SUPFAM" id="SSF140931">
    <property type="entry name" value="Fic-like"/>
    <property type="match status" value="1"/>
</dbReference>
<dbReference type="PROSITE" id="PS50297">
    <property type="entry name" value="ANK_REP_REGION"/>
    <property type="match status" value="1"/>
</dbReference>
<dbReference type="PROSITE" id="PS50088">
    <property type="entry name" value="ANK_REPEAT"/>
    <property type="match status" value="4"/>
</dbReference>
<dbReference type="PROSITE" id="PS51459">
    <property type="entry name" value="FIDO"/>
    <property type="match status" value="1"/>
</dbReference>
<evidence type="ECO:0000255" key="1">
    <source>
        <dbReference type="PROSITE-ProRule" id="PRU00791"/>
    </source>
</evidence>
<evidence type="ECO:0000269" key="2">
    <source>
    </source>
</evidence>
<evidence type="ECO:0000269" key="3">
    <source>
    </source>
</evidence>
<evidence type="ECO:0000269" key="4">
    <source>
    </source>
</evidence>
<evidence type="ECO:0000269" key="5">
    <source>
    </source>
</evidence>
<evidence type="ECO:0000269" key="6">
    <source>
    </source>
</evidence>
<evidence type="ECO:0007829" key="7">
    <source>
        <dbReference type="PDB" id="4BEP"/>
    </source>
</evidence>
<evidence type="ECO:0007829" key="8">
    <source>
        <dbReference type="PDB" id="4BER"/>
    </source>
</evidence>
<evidence type="ECO:0007829" key="9">
    <source>
        <dbReference type="PDB" id="4BES"/>
    </source>
</evidence>
<evidence type="ECO:0007829" key="10">
    <source>
        <dbReference type="PDB" id="4BET"/>
    </source>
</evidence>
<evidence type="ECO:0007829" key="11">
    <source>
        <dbReference type="PDB" id="6SKU"/>
    </source>
</evidence>
<sequence>MVKIMPNLPGLYFLQAYPSEEIWRLFVDGRFWSKENGWRGYESREPGCLNAALESLCSIALQVEKSGEEFELSVDLIKRIHKKCGKKVEELQEKNPGELRTDEPVSFGIPAGRASIKGIEEFLSLVFLTEGGAEFGPGKAGPFGPRFDKNYFKNLNPEQIPDLAKQIYFDMCKYGHSNTNHFYLAVMKNVDVYLEKITQSYNKEIKTAETLDEKLKIIVKHIRMYEVLHPFRDANGRTFVNNLLNILLMQQGLPPATFYEPNVFDLYSAEELVVVVKEAIFNTVEIIEQSKRKTPITLYGYHSSLEEQTKFRDMLDSPSYEKIKHMDFSDLNPEKLHLKTQKCLSSLNEQYPLHRGAIYLSDPGEIKLLLSNRNESQINQQIEQGAPPIYVGKTPAHLAVISGNMAMLDELIAKKADLSLQDYDGKTALHYAAECGNMQIMGKILKVVLSQEDAIKVLNIKDNHGKTAFHYAAEFGTPELISALTTTEVIQINEPDNSGSSAITLAYKNHKLKIFDELLNSGADISDELLDAIWARKDKETLGKIIAKNEKILLNKEAFRIAISLGSVSLVKKFLRAGVDIDIPLTKDKATPLMLSINSGNPKLVSYLLKKGANTRLTDTSGNSVLHYVFYSKAENREALANIITEKDKKLINQPNANGNPPLYNAVVVNDLKMATILLEMGARVDFEDRLGNNILHSAMRRCDLPIILDIVKKDSTLLHKRNSERRNPFHQALHEMHTFPSSKETEEIHFMNLSDLLLKEGVDLNKKDIKGKTILDIALSKQYFHLCVKLMKAGAHTNISSPSKFLKNSDANSILERPFKFKNDLKKELDNNPLIAMAQINDLYVQIKNNRIRTPTGYAPKEGVSFFKGKSNDAKAHDEVLSVLKELYDSKLTEMLGNLPGEGLEEIKRSQKFFDGELKLLIKNQDISRKVDKKSIQEAVGTSLKLKW</sequence>